<protein>
    <recommendedName>
        <fullName evidence="4">Alpha-conotoxin OIB</fullName>
    </recommendedName>
    <alternativeName>
        <fullName evidence="3">Alpha-conotoxin SI-like</fullName>
    </alternativeName>
</protein>
<sequence length="13" mass="1359">ICCNPACGPKYSC</sequence>
<evidence type="ECO:0000250" key="1">
    <source>
        <dbReference type="UniProtKB" id="P15471"/>
    </source>
</evidence>
<evidence type="ECO:0000269" key="2">
    <source>
    </source>
</evidence>
<evidence type="ECO:0000303" key="3">
    <source>
    </source>
</evidence>
<evidence type="ECO:0000305" key="4"/>
<evidence type="ECO:0000305" key="5">
    <source>
    </source>
</evidence>
<reference key="1">
    <citation type="journal article" date="2022" name="Int. J. Mol. Sci.">
        <title>Research into the bioengineering of a novel alpha-conotoxin from the milked venom of Conus obscurus.</title>
        <authorList>
            <person name="Wiere S."/>
            <person name="Sugai C."/>
            <person name="Espiritu M.J."/>
            <person name="Aurelio V.P."/>
            <person name="Reyes C.D."/>
            <person name="Yuzon N."/>
            <person name="Whittal R.M."/>
            <person name="Tytgat J."/>
            <person name="Peigneur S."/>
            <person name="Bingham J.P."/>
        </authorList>
    </citation>
    <scope>PROTEIN SEQUENCE</scope>
    <scope>AMIDATION AT CYS-13</scope>
    <scope>SUBCELLULAR LOCATION</scope>
    <scope>MASS SPECTROMETRY</scope>
    <source>
        <tissue>Venom</tissue>
    </source>
</reference>
<feature type="peptide" id="PRO_0000457919" description="Alpha-conotoxin OIB" evidence="2">
    <location>
        <begin position="1"/>
        <end position="13"/>
    </location>
</feature>
<feature type="modified residue" description="Cysteine amide" evidence="2">
    <location>
        <position position="13"/>
    </location>
</feature>
<feature type="disulfide bond" evidence="1">
    <location>
        <begin position="2"/>
        <end position="7"/>
    </location>
</feature>
<feature type="disulfide bond" evidence="1">
    <location>
        <begin position="3"/>
        <end position="13"/>
    </location>
</feature>
<feature type="unsure residue" description="I or L" evidence="5">
    <location>
        <position position="1"/>
    </location>
</feature>
<dbReference type="GO" id="GO:0005576">
    <property type="term" value="C:extracellular region"/>
    <property type="evidence" value="ECO:0007669"/>
    <property type="project" value="UniProtKB-SubCell"/>
</dbReference>
<dbReference type="GO" id="GO:0035792">
    <property type="term" value="C:host cell postsynaptic membrane"/>
    <property type="evidence" value="ECO:0007669"/>
    <property type="project" value="UniProtKB-KW"/>
</dbReference>
<dbReference type="GO" id="GO:0030550">
    <property type="term" value="F:acetylcholine receptor inhibitor activity"/>
    <property type="evidence" value="ECO:0007669"/>
    <property type="project" value="UniProtKB-KW"/>
</dbReference>
<dbReference type="GO" id="GO:0090729">
    <property type="term" value="F:toxin activity"/>
    <property type="evidence" value="ECO:0007669"/>
    <property type="project" value="UniProtKB-KW"/>
</dbReference>
<dbReference type="InterPro" id="IPR018072">
    <property type="entry name" value="Conotoxin_a-typ_CS"/>
</dbReference>
<dbReference type="PROSITE" id="PS60014">
    <property type="entry name" value="ALPHA_CONOTOXIN"/>
    <property type="match status" value="1"/>
</dbReference>
<proteinExistence type="evidence at protein level"/>
<name>CA1B_CONOB</name>
<comment type="function">
    <text evidence="1">Alpha-conotoxins act on postsynaptic membranes, they bind to the nicotinic acetylcholine receptors (nAChR) and thus inhibit them. Is active on muscle nAChR. On mice muscle receptors, its higher affinity site is the alpha/delta nAChR subunit interface. On Torpedo receptors, it does not distinguish between alpha/delta and alpha/gamma acetylcholine-binding sites. In vivo, causes paralysis followed by death when injected into goldfish. In contrast, has no effect on mice, when similar doses are intraperitoneally or intracerebrally injected.</text>
</comment>
<comment type="subcellular location">
    <subcellularLocation>
        <location evidence="2">Secreted</location>
    </subcellularLocation>
</comment>
<comment type="tissue specificity">
    <text evidence="5">Expressed by the venom duct.</text>
</comment>
<comment type="domain">
    <text evidence="5">The cysteine framework is I (CC-C-C). Alpha3/5 pattern.</text>
</comment>
<comment type="mass spectrometry" mass="1357.6" method="MALDI" evidence="2"/>
<comment type="miscellaneous">
    <text evidence="4">The primary structure of the mature peptide is identical to that of Alpha-conotoxin SI from Conus striatus (AC P15471), with the hypothesis that the first residue is an Ile.</text>
</comment>
<comment type="similarity">
    <text evidence="4">Belongs to the conotoxin A superfamily.</text>
</comment>
<accession>P0DQY1</accession>
<keyword id="KW-0008">Acetylcholine receptor inhibiting toxin</keyword>
<keyword id="KW-0027">Amidation</keyword>
<keyword id="KW-0903">Direct protein sequencing</keyword>
<keyword id="KW-1015">Disulfide bond</keyword>
<keyword id="KW-0528">Neurotoxin</keyword>
<keyword id="KW-0629">Postsynaptic neurotoxin</keyword>
<keyword id="KW-0964">Secreted</keyword>
<keyword id="KW-0800">Toxin</keyword>
<organism>
    <name type="scientific">Conus obscurus</name>
    <name type="common">Obscure cone</name>
    <name type="synonym">Conus halitropus</name>
    <dbReference type="NCBI Taxonomy" id="89447"/>
    <lineage>
        <taxon>Eukaryota</taxon>
        <taxon>Metazoa</taxon>
        <taxon>Spiralia</taxon>
        <taxon>Lophotrochozoa</taxon>
        <taxon>Mollusca</taxon>
        <taxon>Gastropoda</taxon>
        <taxon>Caenogastropoda</taxon>
        <taxon>Neogastropoda</taxon>
        <taxon>Conoidea</taxon>
        <taxon>Conidae</taxon>
        <taxon>Conus</taxon>
        <taxon>Gastridium</taxon>
    </lineage>
</organism>